<sequence>MQALLFISCGAILGASLRWAIGLLFNPLFSSFAFGALIANLLGCLIIGVLLGLFWQFPQISAEWRLFLITGFLGSLTTFSSFSSEVVELFFNDKWLNGFCVLMMHLFGCLAMTVLGIWIYKICSQLLS</sequence>
<protein>
    <recommendedName>
        <fullName evidence="1">Fluoride-specific ion channel FluC</fullName>
    </recommendedName>
</protein>
<proteinExistence type="inferred from homology"/>
<gene>
    <name evidence="1" type="primary">fluC</name>
    <name evidence="1" type="synonym">crcB</name>
    <name type="ordered locus">CGSHiEE_09165</name>
</gene>
<accession>A5UEC3</accession>
<name>FLUC_HAEIE</name>
<organism>
    <name type="scientific">Haemophilus influenzae (strain PittEE)</name>
    <dbReference type="NCBI Taxonomy" id="374930"/>
    <lineage>
        <taxon>Bacteria</taxon>
        <taxon>Pseudomonadati</taxon>
        <taxon>Pseudomonadota</taxon>
        <taxon>Gammaproteobacteria</taxon>
        <taxon>Pasteurellales</taxon>
        <taxon>Pasteurellaceae</taxon>
        <taxon>Haemophilus</taxon>
    </lineage>
</organism>
<feature type="chain" id="PRO_1000026391" description="Fluoride-specific ion channel FluC">
    <location>
        <begin position="1"/>
        <end position="128"/>
    </location>
</feature>
<feature type="transmembrane region" description="Helical" evidence="1">
    <location>
        <begin position="5"/>
        <end position="25"/>
    </location>
</feature>
<feature type="transmembrane region" description="Helical" evidence="1">
    <location>
        <begin position="34"/>
        <end position="54"/>
    </location>
</feature>
<feature type="transmembrane region" description="Helical" evidence="1">
    <location>
        <begin position="67"/>
        <end position="87"/>
    </location>
</feature>
<feature type="transmembrane region" description="Helical" evidence="1">
    <location>
        <begin position="99"/>
        <end position="119"/>
    </location>
</feature>
<feature type="binding site" evidence="1">
    <location>
        <position position="74"/>
    </location>
    <ligand>
        <name>Na(+)</name>
        <dbReference type="ChEBI" id="CHEBI:29101"/>
        <note>structural</note>
    </ligand>
</feature>
<feature type="binding site" evidence="1">
    <location>
        <position position="77"/>
    </location>
    <ligand>
        <name>Na(+)</name>
        <dbReference type="ChEBI" id="CHEBI:29101"/>
        <note>structural</note>
    </ligand>
</feature>
<reference key="1">
    <citation type="journal article" date="2007" name="Genome Biol.">
        <title>Characterization and modeling of the Haemophilus influenzae core and supragenomes based on the complete genomic sequences of Rd and 12 clinical nontypeable strains.</title>
        <authorList>
            <person name="Hogg J.S."/>
            <person name="Hu F.Z."/>
            <person name="Janto B."/>
            <person name="Boissy R."/>
            <person name="Hayes J."/>
            <person name="Keefe R."/>
            <person name="Post J.C."/>
            <person name="Ehrlich G.D."/>
        </authorList>
    </citation>
    <scope>NUCLEOTIDE SEQUENCE [LARGE SCALE GENOMIC DNA]</scope>
    <source>
        <strain>PittEE</strain>
    </source>
</reference>
<dbReference type="EMBL" id="CP000671">
    <property type="protein sequence ID" value="ABQ99124.1"/>
    <property type="molecule type" value="Genomic_DNA"/>
</dbReference>
<dbReference type="SMR" id="A5UEC3"/>
<dbReference type="KEGG" id="hip:CGSHiEE_09165"/>
<dbReference type="HOGENOM" id="CLU_114342_3_3_6"/>
<dbReference type="GO" id="GO:0005886">
    <property type="term" value="C:plasma membrane"/>
    <property type="evidence" value="ECO:0007669"/>
    <property type="project" value="UniProtKB-SubCell"/>
</dbReference>
<dbReference type="GO" id="GO:0062054">
    <property type="term" value="F:fluoride channel activity"/>
    <property type="evidence" value="ECO:0007669"/>
    <property type="project" value="UniProtKB-UniRule"/>
</dbReference>
<dbReference type="GO" id="GO:0046872">
    <property type="term" value="F:metal ion binding"/>
    <property type="evidence" value="ECO:0007669"/>
    <property type="project" value="UniProtKB-KW"/>
</dbReference>
<dbReference type="GO" id="GO:0140114">
    <property type="term" value="P:cellular detoxification of fluoride"/>
    <property type="evidence" value="ECO:0007669"/>
    <property type="project" value="UniProtKB-UniRule"/>
</dbReference>
<dbReference type="HAMAP" id="MF_00454">
    <property type="entry name" value="FluC"/>
    <property type="match status" value="1"/>
</dbReference>
<dbReference type="InterPro" id="IPR003691">
    <property type="entry name" value="FluC"/>
</dbReference>
<dbReference type="NCBIfam" id="TIGR00494">
    <property type="entry name" value="crcB"/>
    <property type="match status" value="1"/>
</dbReference>
<dbReference type="NCBIfam" id="NF010792">
    <property type="entry name" value="PRK14196.1"/>
    <property type="match status" value="1"/>
</dbReference>
<dbReference type="PANTHER" id="PTHR28259">
    <property type="entry name" value="FLUORIDE EXPORT PROTEIN 1-RELATED"/>
    <property type="match status" value="1"/>
</dbReference>
<dbReference type="PANTHER" id="PTHR28259:SF1">
    <property type="entry name" value="FLUORIDE EXPORT PROTEIN 1-RELATED"/>
    <property type="match status" value="1"/>
</dbReference>
<dbReference type="Pfam" id="PF02537">
    <property type="entry name" value="CRCB"/>
    <property type="match status" value="1"/>
</dbReference>
<comment type="function">
    <text evidence="1">Fluoride-specific ion channel. Important for reducing fluoride concentration in the cell, thus reducing its toxicity.</text>
</comment>
<comment type="catalytic activity">
    <reaction evidence="1">
        <text>fluoride(in) = fluoride(out)</text>
        <dbReference type="Rhea" id="RHEA:76159"/>
        <dbReference type="ChEBI" id="CHEBI:17051"/>
    </reaction>
    <physiologicalReaction direction="left-to-right" evidence="1">
        <dbReference type="Rhea" id="RHEA:76160"/>
    </physiologicalReaction>
</comment>
<comment type="activity regulation">
    <text evidence="1">Na(+) is not transported, but it plays an essential structural role and its presence is essential for fluoride channel function.</text>
</comment>
<comment type="subcellular location">
    <subcellularLocation>
        <location evidence="1">Cell inner membrane</location>
        <topology evidence="1">Multi-pass membrane protein</topology>
    </subcellularLocation>
</comment>
<comment type="similarity">
    <text evidence="1">Belongs to the fluoride channel Fluc/FEX (TC 1.A.43) family.</text>
</comment>
<evidence type="ECO:0000255" key="1">
    <source>
        <dbReference type="HAMAP-Rule" id="MF_00454"/>
    </source>
</evidence>
<keyword id="KW-0997">Cell inner membrane</keyword>
<keyword id="KW-1003">Cell membrane</keyword>
<keyword id="KW-0407">Ion channel</keyword>
<keyword id="KW-0406">Ion transport</keyword>
<keyword id="KW-0472">Membrane</keyword>
<keyword id="KW-0479">Metal-binding</keyword>
<keyword id="KW-0915">Sodium</keyword>
<keyword id="KW-0812">Transmembrane</keyword>
<keyword id="KW-1133">Transmembrane helix</keyword>
<keyword id="KW-0813">Transport</keyword>